<organism>
    <name type="scientific">Bordetella petrii (strain ATCC BAA-461 / DSM 12804 / CCUG 43448)</name>
    <dbReference type="NCBI Taxonomy" id="340100"/>
    <lineage>
        <taxon>Bacteria</taxon>
        <taxon>Pseudomonadati</taxon>
        <taxon>Pseudomonadota</taxon>
        <taxon>Betaproteobacteria</taxon>
        <taxon>Burkholderiales</taxon>
        <taxon>Alcaligenaceae</taxon>
        <taxon>Bordetella</taxon>
    </lineage>
</organism>
<sequence>MTRQDASTPAPSGARIIDGAALAQRIREDVARRVQALAAKGVRPGLAVVLVGDDPASQVYVRNKVAACEKAGLYSIKEQYPADMTEAELLARIDTLNRDPAIHGILVQLPLPPHMSSHKVIEAIAAEKDVDGFHISNAGLLMTGQPLFRPCTPYGVMKMLEAEGVPLRGAEAVIVGASNIVGKPMAMLLLQAGATITICNSKTRDLAAQTRRADVLVVATGKPGMIDGSMIKPGAVVIDVGINRGADGKLCGDVDFASAREVAGAITPVPGGVGPMTIAMLLVNTVEAAERTAG</sequence>
<proteinExistence type="inferred from homology"/>
<dbReference type="EC" id="1.5.1.5" evidence="1"/>
<dbReference type="EC" id="3.5.4.9" evidence="1"/>
<dbReference type="EMBL" id="AM902716">
    <property type="protein sequence ID" value="CAP43364.1"/>
    <property type="molecule type" value="Genomic_DNA"/>
</dbReference>
<dbReference type="SMR" id="A9ISZ5"/>
<dbReference type="STRING" id="94624.Bpet3022"/>
<dbReference type="KEGG" id="bpt:Bpet3022"/>
<dbReference type="eggNOG" id="COG0190">
    <property type="taxonomic scope" value="Bacteria"/>
</dbReference>
<dbReference type="UniPathway" id="UPA00193"/>
<dbReference type="Proteomes" id="UP000001225">
    <property type="component" value="Chromosome"/>
</dbReference>
<dbReference type="GO" id="GO:0005829">
    <property type="term" value="C:cytosol"/>
    <property type="evidence" value="ECO:0007669"/>
    <property type="project" value="TreeGrafter"/>
</dbReference>
<dbReference type="GO" id="GO:0004477">
    <property type="term" value="F:methenyltetrahydrofolate cyclohydrolase activity"/>
    <property type="evidence" value="ECO:0007669"/>
    <property type="project" value="UniProtKB-UniRule"/>
</dbReference>
<dbReference type="GO" id="GO:0004488">
    <property type="term" value="F:methylenetetrahydrofolate dehydrogenase (NADP+) activity"/>
    <property type="evidence" value="ECO:0007669"/>
    <property type="project" value="UniProtKB-UniRule"/>
</dbReference>
<dbReference type="GO" id="GO:0000105">
    <property type="term" value="P:L-histidine biosynthetic process"/>
    <property type="evidence" value="ECO:0007669"/>
    <property type="project" value="UniProtKB-KW"/>
</dbReference>
<dbReference type="GO" id="GO:0009086">
    <property type="term" value="P:methionine biosynthetic process"/>
    <property type="evidence" value="ECO:0007669"/>
    <property type="project" value="UniProtKB-KW"/>
</dbReference>
<dbReference type="GO" id="GO:0006164">
    <property type="term" value="P:purine nucleotide biosynthetic process"/>
    <property type="evidence" value="ECO:0007669"/>
    <property type="project" value="UniProtKB-KW"/>
</dbReference>
<dbReference type="GO" id="GO:0035999">
    <property type="term" value="P:tetrahydrofolate interconversion"/>
    <property type="evidence" value="ECO:0007669"/>
    <property type="project" value="UniProtKB-UniRule"/>
</dbReference>
<dbReference type="CDD" id="cd01080">
    <property type="entry name" value="NAD_bind_m-THF_DH_Cyclohyd"/>
    <property type="match status" value="1"/>
</dbReference>
<dbReference type="FunFam" id="3.40.50.720:FF:000094">
    <property type="entry name" value="Bifunctional protein FolD"/>
    <property type="match status" value="1"/>
</dbReference>
<dbReference type="FunFam" id="3.40.50.10860:FF:000005">
    <property type="entry name" value="C-1-tetrahydrofolate synthase, cytoplasmic, putative"/>
    <property type="match status" value="1"/>
</dbReference>
<dbReference type="Gene3D" id="3.40.50.10860">
    <property type="entry name" value="Leucine Dehydrogenase, chain A, domain 1"/>
    <property type="match status" value="1"/>
</dbReference>
<dbReference type="Gene3D" id="3.40.50.720">
    <property type="entry name" value="NAD(P)-binding Rossmann-like Domain"/>
    <property type="match status" value="1"/>
</dbReference>
<dbReference type="HAMAP" id="MF_01576">
    <property type="entry name" value="THF_DHG_CYH"/>
    <property type="match status" value="1"/>
</dbReference>
<dbReference type="InterPro" id="IPR046346">
    <property type="entry name" value="Aminoacid_DH-like_N_sf"/>
</dbReference>
<dbReference type="InterPro" id="IPR036291">
    <property type="entry name" value="NAD(P)-bd_dom_sf"/>
</dbReference>
<dbReference type="InterPro" id="IPR000672">
    <property type="entry name" value="THF_DH/CycHdrlase"/>
</dbReference>
<dbReference type="InterPro" id="IPR020630">
    <property type="entry name" value="THF_DH/CycHdrlase_cat_dom"/>
</dbReference>
<dbReference type="InterPro" id="IPR020867">
    <property type="entry name" value="THF_DH/CycHdrlase_CS"/>
</dbReference>
<dbReference type="InterPro" id="IPR020631">
    <property type="entry name" value="THF_DH/CycHdrlase_NAD-bd_dom"/>
</dbReference>
<dbReference type="NCBIfam" id="NF008058">
    <property type="entry name" value="PRK10792.1"/>
    <property type="match status" value="1"/>
</dbReference>
<dbReference type="NCBIfam" id="NF010783">
    <property type="entry name" value="PRK14186.1"/>
    <property type="match status" value="1"/>
</dbReference>
<dbReference type="NCBIfam" id="NF010786">
    <property type="entry name" value="PRK14189.1"/>
    <property type="match status" value="1"/>
</dbReference>
<dbReference type="PANTHER" id="PTHR48099:SF5">
    <property type="entry name" value="C-1-TETRAHYDROFOLATE SYNTHASE, CYTOPLASMIC"/>
    <property type="match status" value="1"/>
</dbReference>
<dbReference type="PANTHER" id="PTHR48099">
    <property type="entry name" value="C-1-TETRAHYDROFOLATE SYNTHASE, CYTOPLASMIC-RELATED"/>
    <property type="match status" value="1"/>
</dbReference>
<dbReference type="Pfam" id="PF00763">
    <property type="entry name" value="THF_DHG_CYH"/>
    <property type="match status" value="1"/>
</dbReference>
<dbReference type="Pfam" id="PF02882">
    <property type="entry name" value="THF_DHG_CYH_C"/>
    <property type="match status" value="1"/>
</dbReference>
<dbReference type="PRINTS" id="PR00085">
    <property type="entry name" value="THFDHDRGNASE"/>
</dbReference>
<dbReference type="SUPFAM" id="SSF53223">
    <property type="entry name" value="Aminoacid dehydrogenase-like, N-terminal domain"/>
    <property type="match status" value="1"/>
</dbReference>
<dbReference type="SUPFAM" id="SSF51735">
    <property type="entry name" value="NAD(P)-binding Rossmann-fold domains"/>
    <property type="match status" value="1"/>
</dbReference>
<dbReference type="PROSITE" id="PS00766">
    <property type="entry name" value="THF_DHG_CYH_1"/>
    <property type="match status" value="1"/>
</dbReference>
<dbReference type="PROSITE" id="PS00767">
    <property type="entry name" value="THF_DHG_CYH_2"/>
    <property type="match status" value="1"/>
</dbReference>
<accession>A9ISZ5</accession>
<name>FOLD_BORPD</name>
<protein>
    <recommendedName>
        <fullName evidence="1">Bifunctional protein FolD</fullName>
    </recommendedName>
    <domain>
        <recommendedName>
            <fullName evidence="1">Methylenetetrahydrofolate dehydrogenase</fullName>
            <ecNumber evidence="1">1.5.1.5</ecNumber>
        </recommendedName>
    </domain>
    <domain>
        <recommendedName>
            <fullName evidence="1">Methenyltetrahydrofolate cyclohydrolase</fullName>
            <ecNumber evidence="1">3.5.4.9</ecNumber>
        </recommendedName>
    </domain>
</protein>
<feature type="chain" id="PRO_0000340575" description="Bifunctional protein FolD">
    <location>
        <begin position="1"/>
        <end position="294"/>
    </location>
</feature>
<feature type="binding site" evidence="1">
    <location>
        <begin position="176"/>
        <end position="178"/>
    </location>
    <ligand>
        <name>NADP(+)</name>
        <dbReference type="ChEBI" id="CHEBI:58349"/>
    </ligand>
</feature>
<feature type="binding site" evidence="1">
    <location>
        <position position="201"/>
    </location>
    <ligand>
        <name>NADP(+)</name>
        <dbReference type="ChEBI" id="CHEBI:58349"/>
    </ligand>
</feature>
<feature type="binding site" evidence="1">
    <location>
        <position position="242"/>
    </location>
    <ligand>
        <name>NADP(+)</name>
        <dbReference type="ChEBI" id="CHEBI:58349"/>
    </ligand>
</feature>
<evidence type="ECO:0000255" key="1">
    <source>
        <dbReference type="HAMAP-Rule" id="MF_01576"/>
    </source>
</evidence>
<comment type="function">
    <text evidence="1">Catalyzes the oxidation of 5,10-methylenetetrahydrofolate to 5,10-methenyltetrahydrofolate and then the hydrolysis of 5,10-methenyltetrahydrofolate to 10-formyltetrahydrofolate.</text>
</comment>
<comment type="catalytic activity">
    <reaction evidence="1">
        <text>(6R)-5,10-methylene-5,6,7,8-tetrahydrofolate + NADP(+) = (6R)-5,10-methenyltetrahydrofolate + NADPH</text>
        <dbReference type="Rhea" id="RHEA:22812"/>
        <dbReference type="ChEBI" id="CHEBI:15636"/>
        <dbReference type="ChEBI" id="CHEBI:57455"/>
        <dbReference type="ChEBI" id="CHEBI:57783"/>
        <dbReference type="ChEBI" id="CHEBI:58349"/>
        <dbReference type="EC" id="1.5.1.5"/>
    </reaction>
</comment>
<comment type="catalytic activity">
    <reaction evidence="1">
        <text>(6R)-5,10-methenyltetrahydrofolate + H2O = (6R)-10-formyltetrahydrofolate + H(+)</text>
        <dbReference type="Rhea" id="RHEA:23700"/>
        <dbReference type="ChEBI" id="CHEBI:15377"/>
        <dbReference type="ChEBI" id="CHEBI:15378"/>
        <dbReference type="ChEBI" id="CHEBI:57455"/>
        <dbReference type="ChEBI" id="CHEBI:195366"/>
        <dbReference type="EC" id="3.5.4.9"/>
    </reaction>
</comment>
<comment type="pathway">
    <text evidence="1">One-carbon metabolism; tetrahydrofolate interconversion.</text>
</comment>
<comment type="subunit">
    <text evidence="1">Homodimer.</text>
</comment>
<comment type="similarity">
    <text evidence="1">Belongs to the tetrahydrofolate dehydrogenase/cyclohydrolase family.</text>
</comment>
<gene>
    <name evidence="1" type="primary">folD</name>
    <name type="ordered locus">Bpet3022</name>
</gene>
<reference key="1">
    <citation type="journal article" date="2008" name="BMC Genomics">
        <title>The missing link: Bordetella petrii is endowed with both the metabolic versatility of environmental bacteria and virulence traits of pathogenic Bordetellae.</title>
        <authorList>
            <person name="Gross R."/>
            <person name="Guzman C.A."/>
            <person name="Sebaihia M."/>
            <person name="Martin dos Santos V.A.P."/>
            <person name="Pieper D.H."/>
            <person name="Koebnik R."/>
            <person name="Lechner M."/>
            <person name="Bartels D."/>
            <person name="Buhrmester J."/>
            <person name="Choudhuri J.V."/>
            <person name="Ebensen T."/>
            <person name="Gaigalat L."/>
            <person name="Herrmann S."/>
            <person name="Khachane A.N."/>
            <person name="Larisch C."/>
            <person name="Link S."/>
            <person name="Linke B."/>
            <person name="Meyer F."/>
            <person name="Mormann S."/>
            <person name="Nakunst D."/>
            <person name="Rueckert C."/>
            <person name="Schneiker-Bekel S."/>
            <person name="Schulze K."/>
            <person name="Voerholter F.-J."/>
            <person name="Yevsa T."/>
            <person name="Engle J.T."/>
            <person name="Goldman W.E."/>
            <person name="Puehler A."/>
            <person name="Goebel U.B."/>
            <person name="Goesmann A."/>
            <person name="Bloecker H."/>
            <person name="Kaiser O."/>
            <person name="Martinez-Arias R."/>
        </authorList>
    </citation>
    <scope>NUCLEOTIDE SEQUENCE [LARGE SCALE GENOMIC DNA]</scope>
    <source>
        <strain>ATCC BAA-461 / DSM 12804 / CCUG 43448</strain>
    </source>
</reference>
<keyword id="KW-0028">Amino-acid biosynthesis</keyword>
<keyword id="KW-0368">Histidine biosynthesis</keyword>
<keyword id="KW-0378">Hydrolase</keyword>
<keyword id="KW-0486">Methionine biosynthesis</keyword>
<keyword id="KW-0511">Multifunctional enzyme</keyword>
<keyword id="KW-0521">NADP</keyword>
<keyword id="KW-0554">One-carbon metabolism</keyword>
<keyword id="KW-0560">Oxidoreductase</keyword>
<keyword id="KW-0658">Purine biosynthesis</keyword>